<comment type="function">
    <text evidence="1">Catalyzes the 2-thiolation of uridine at the wobble position (U34) of tRNA, leading to the formation of s(2)U34.</text>
</comment>
<comment type="catalytic activity">
    <reaction evidence="1">
        <text>S-sulfanyl-L-cysteinyl-[protein] + uridine(34) in tRNA + AH2 + ATP = 2-thiouridine(34) in tRNA + L-cysteinyl-[protein] + A + AMP + diphosphate + H(+)</text>
        <dbReference type="Rhea" id="RHEA:47032"/>
        <dbReference type="Rhea" id="RHEA-COMP:10131"/>
        <dbReference type="Rhea" id="RHEA-COMP:11726"/>
        <dbReference type="Rhea" id="RHEA-COMP:11727"/>
        <dbReference type="Rhea" id="RHEA-COMP:11728"/>
        <dbReference type="ChEBI" id="CHEBI:13193"/>
        <dbReference type="ChEBI" id="CHEBI:15378"/>
        <dbReference type="ChEBI" id="CHEBI:17499"/>
        <dbReference type="ChEBI" id="CHEBI:29950"/>
        <dbReference type="ChEBI" id="CHEBI:30616"/>
        <dbReference type="ChEBI" id="CHEBI:33019"/>
        <dbReference type="ChEBI" id="CHEBI:61963"/>
        <dbReference type="ChEBI" id="CHEBI:65315"/>
        <dbReference type="ChEBI" id="CHEBI:87170"/>
        <dbReference type="ChEBI" id="CHEBI:456215"/>
        <dbReference type="EC" id="2.8.1.13"/>
    </reaction>
</comment>
<comment type="subcellular location">
    <subcellularLocation>
        <location evidence="1">Cytoplasm</location>
    </subcellularLocation>
</comment>
<comment type="similarity">
    <text evidence="1">Belongs to the MnmA/TRMU family.</text>
</comment>
<feature type="chain" id="PRO_0000121679" description="tRNA-specific 2-thiouridylase MnmA">
    <location>
        <begin position="1"/>
        <end position="372"/>
    </location>
</feature>
<feature type="region of interest" description="Interaction with target base in tRNA" evidence="1">
    <location>
        <begin position="97"/>
        <end position="99"/>
    </location>
</feature>
<feature type="region of interest" description="Interaction with tRNA" evidence="1">
    <location>
        <begin position="149"/>
        <end position="151"/>
    </location>
</feature>
<feature type="region of interest" description="Interaction with tRNA" evidence="1">
    <location>
        <begin position="309"/>
        <end position="310"/>
    </location>
</feature>
<feature type="active site" description="Nucleophile" evidence="1">
    <location>
        <position position="102"/>
    </location>
</feature>
<feature type="active site" description="Cysteine persulfide intermediate" evidence="1">
    <location>
        <position position="199"/>
    </location>
</feature>
<feature type="binding site" evidence="1">
    <location>
        <begin position="11"/>
        <end position="18"/>
    </location>
    <ligand>
        <name>ATP</name>
        <dbReference type="ChEBI" id="CHEBI:30616"/>
    </ligand>
</feature>
<feature type="binding site" evidence="1">
    <location>
        <position position="37"/>
    </location>
    <ligand>
        <name>ATP</name>
        <dbReference type="ChEBI" id="CHEBI:30616"/>
    </ligand>
</feature>
<feature type="binding site" evidence="1">
    <location>
        <position position="126"/>
    </location>
    <ligand>
        <name>ATP</name>
        <dbReference type="ChEBI" id="CHEBI:30616"/>
    </ligand>
</feature>
<feature type="site" description="Interaction with tRNA" evidence="1">
    <location>
        <position position="127"/>
    </location>
</feature>
<feature type="site" description="Interaction with tRNA" evidence="1">
    <location>
        <position position="342"/>
    </location>
</feature>
<feature type="disulfide bond" description="Alternate" evidence="1">
    <location>
        <begin position="102"/>
        <end position="199"/>
    </location>
</feature>
<gene>
    <name evidence="1" type="primary">mnmA</name>
    <name type="synonym">trmU</name>
    <name type="ordered locus">SE_1304</name>
</gene>
<proteinExistence type="inferred from homology"/>
<evidence type="ECO:0000255" key="1">
    <source>
        <dbReference type="HAMAP-Rule" id="MF_00144"/>
    </source>
</evidence>
<sequence length="372" mass="42300">MSNKDIRVVVGMSGGVDSSVTAYLLKEQGYDVIGIFMKNWDDTDENGVCTATEDYNDVIAVCNQIGIPYYAVNFEEQYWDKVFTYFLDEYKKGRTPNPDVMCNKEIKFKAFLEHALKLGADYVATGHYARIRRHDDGHVEMLRGVDNNKDQTYFLNQLSQEQLSKVMFPIGDIEKSEVRRIAEEQNLATAKKKDSTGICFIGERNFKEFLSHYLPAQSGEMLTLNGKKMGQHSGLMYYTIGQRHGLGIGGDGDPWFVVGKNLNDNVLYVEQGFHHDALYSDYLIASDYSFVNPSEIDLEKGFECTAKFRYRQKDTKVYVQRENENSIRVTFAEPVRAITPGQAVVFYNQEVCLGGATIDDVYKNEGQLSYVV</sequence>
<dbReference type="EC" id="2.8.1.13" evidence="1"/>
<dbReference type="EMBL" id="AE015929">
    <property type="protein sequence ID" value="AAO04903.1"/>
    <property type="molecule type" value="Genomic_DNA"/>
</dbReference>
<dbReference type="RefSeq" id="NP_764859.1">
    <property type="nucleotide sequence ID" value="NC_004461.1"/>
</dbReference>
<dbReference type="RefSeq" id="WP_001830892.1">
    <property type="nucleotide sequence ID" value="NZ_WBME01000053.1"/>
</dbReference>
<dbReference type="SMR" id="Q8CSA5"/>
<dbReference type="GeneID" id="50018580"/>
<dbReference type="KEGG" id="sep:SE_1304"/>
<dbReference type="PATRIC" id="fig|176280.10.peg.1273"/>
<dbReference type="eggNOG" id="COG0482">
    <property type="taxonomic scope" value="Bacteria"/>
</dbReference>
<dbReference type="HOGENOM" id="CLU_035188_1_0_9"/>
<dbReference type="OrthoDB" id="9800696at2"/>
<dbReference type="Proteomes" id="UP000001411">
    <property type="component" value="Chromosome"/>
</dbReference>
<dbReference type="GO" id="GO:0005737">
    <property type="term" value="C:cytoplasm"/>
    <property type="evidence" value="ECO:0007669"/>
    <property type="project" value="UniProtKB-SubCell"/>
</dbReference>
<dbReference type="GO" id="GO:0005524">
    <property type="term" value="F:ATP binding"/>
    <property type="evidence" value="ECO:0007669"/>
    <property type="project" value="UniProtKB-KW"/>
</dbReference>
<dbReference type="GO" id="GO:0000049">
    <property type="term" value="F:tRNA binding"/>
    <property type="evidence" value="ECO:0007669"/>
    <property type="project" value="UniProtKB-KW"/>
</dbReference>
<dbReference type="GO" id="GO:0103016">
    <property type="term" value="F:tRNA-uridine 2-sulfurtransferase activity"/>
    <property type="evidence" value="ECO:0007669"/>
    <property type="project" value="UniProtKB-EC"/>
</dbReference>
<dbReference type="GO" id="GO:0002143">
    <property type="term" value="P:tRNA wobble position uridine thiolation"/>
    <property type="evidence" value="ECO:0007669"/>
    <property type="project" value="TreeGrafter"/>
</dbReference>
<dbReference type="CDD" id="cd01998">
    <property type="entry name" value="MnmA_TRMU-like"/>
    <property type="match status" value="1"/>
</dbReference>
<dbReference type="FunFam" id="2.30.30.280:FF:000001">
    <property type="entry name" value="tRNA-specific 2-thiouridylase MnmA"/>
    <property type="match status" value="1"/>
</dbReference>
<dbReference type="FunFam" id="2.40.30.10:FF:000023">
    <property type="entry name" value="tRNA-specific 2-thiouridylase MnmA"/>
    <property type="match status" value="1"/>
</dbReference>
<dbReference type="FunFam" id="3.40.50.620:FF:000004">
    <property type="entry name" value="tRNA-specific 2-thiouridylase MnmA"/>
    <property type="match status" value="1"/>
</dbReference>
<dbReference type="Gene3D" id="2.30.30.280">
    <property type="entry name" value="Adenine nucleotide alpha hydrolases-like domains"/>
    <property type="match status" value="1"/>
</dbReference>
<dbReference type="Gene3D" id="3.40.50.620">
    <property type="entry name" value="HUPs"/>
    <property type="match status" value="1"/>
</dbReference>
<dbReference type="Gene3D" id="2.40.30.10">
    <property type="entry name" value="Translation factors"/>
    <property type="match status" value="1"/>
</dbReference>
<dbReference type="HAMAP" id="MF_00144">
    <property type="entry name" value="tRNA_thiouridyl_MnmA"/>
    <property type="match status" value="1"/>
</dbReference>
<dbReference type="InterPro" id="IPR004506">
    <property type="entry name" value="MnmA-like"/>
</dbReference>
<dbReference type="InterPro" id="IPR046885">
    <property type="entry name" value="MnmA-like_C"/>
</dbReference>
<dbReference type="InterPro" id="IPR046884">
    <property type="entry name" value="MnmA-like_central"/>
</dbReference>
<dbReference type="InterPro" id="IPR023382">
    <property type="entry name" value="MnmA-like_central_sf"/>
</dbReference>
<dbReference type="InterPro" id="IPR014729">
    <property type="entry name" value="Rossmann-like_a/b/a_fold"/>
</dbReference>
<dbReference type="NCBIfam" id="NF001138">
    <property type="entry name" value="PRK00143.1"/>
    <property type="match status" value="1"/>
</dbReference>
<dbReference type="NCBIfam" id="TIGR00420">
    <property type="entry name" value="trmU"/>
    <property type="match status" value="1"/>
</dbReference>
<dbReference type="PANTHER" id="PTHR11933:SF5">
    <property type="entry name" value="MITOCHONDRIAL TRNA-SPECIFIC 2-THIOURIDYLASE 1"/>
    <property type="match status" value="1"/>
</dbReference>
<dbReference type="PANTHER" id="PTHR11933">
    <property type="entry name" value="TRNA 5-METHYLAMINOMETHYL-2-THIOURIDYLATE -METHYLTRANSFERASE"/>
    <property type="match status" value="1"/>
</dbReference>
<dbReference type="Pfam" id="PF03054">
    <property type="entry name" value="tRNA_Me_trans"/>
    <property type="match status" value="1"/>
</dbReference>
<dbReference type="Pfam" id="PF20258">
    <property type="entry name" value="tRNA_Me_trans_C"/>
    <property type="match status" value="1"/>
</dbReference>
<dbReference type="Pfam" id="PF20259">
    <property type="entry name" value="tRNA_Me_trans_M"/>
    <property type="match status" value="1"/>
</dbReference>
<dbReference type="SUPFAM" id="SSF52402">
    <property type="entry name" value="Adenine nucleotide alpha hydrolases-like"/>
    <property type="match status" value="1"/>
</dbReference>
<accession>Q8CSA5</accession>
<organism>
    <name type="scientific">Staphylococcus epidermidis (strain ATCC 12228 / FDA PCI 1200)</name>
    <dbReference type="NCBI Taxonomy" id="176280"/>
    <lineage>
        <taxon>Bacteria</taxon>
        <taxon>Bacillati</taxon>
        <taxon>Bacillota</taxon>
        <taxon>Bacilli</taxon>
        <taxon>Bacillales</taxon>
        <taxon>Staphylococcaceae</taxon>
        <taxon>Staphylococcus</taxon>
    </lineage>
</organism>
<keyword id="KW-0067">ATP-binding</keyword>
<keyword id="KW-0963">Cytoplasm</keyword>
<keyword id="KW-1015">Disulfide bond</keyword>
<keyword id="KW-0547">Nucleotide-binding</keyword>
<keyword id="KW-0694">RNA-binding</keyword>
<keyword id="KW-0808">Transferase</keyword>
<keyword id="KW-0819">tRNA processing</keyword>
<keyword id="KW-0820">tRNA-binding</keyword>
<name>MNMA_STAES</name>
<protein>
    <recommendedName>
        <fullName evidence="1">tRNA-specific 2-thiouridylase MnmA</fullName>
        <ecNumber evidence="1">2.8.1.13</ecNumber>
    </recommendedName>
</protein>
<reference key="1">
    <citation type="journal article" date="2003" name="Mol. Microbiol.">
        <title>Genome-based analysis of virulence genes in a non-biofilm-forming Staphylococcus epidermidis strain (ATCC 12228).</title>
        <authorList>
            <person name="Zhang Y.-Q."/>
            <person name="Ren S.-X."/>
            <person name="Li H.-L."/>
            <person name="Wang Y.-X."/>
            <person name="Fu G."/>
            <person name="Yang J."/>
            <person name="Qin Z.-Q."/>
            <person name="Miao Y.-G."/>
            <person name="Wang W.-Y."/>
            <person name="Chen R.-S."/>
            <person name="Shen Y."/>
            <person name="Chen Z."/>
            <person name="Yuan Z.-H."/>
            <person name="Zhao G.-P."/>
            <person name="Qu D."/>
            <person name="Danchin A."/>
            <person name="Wen Y.-M."/>
        </authorList>
    </citation>
    <scope>NUCLEOTIDE SEQUENCE [LARGE SCALE GENOMIC DNA]</scope>
    <source>
        <strain>ATCC 12228 / FDA PCI 1200</strain>
    </source>
</reference>